<proteinExistence type="inferred from homology"/>
<protein>
    <recommendedName>
        <fullName evidence="1">Thiopurine S-methyltransferase</fullName>
        <ecNumber evidence="1">2.1.1.67</ecNumber>
    </recommendedName>
    <alternativeName>
        <fullName evidence="1">Thiopurine methyltransferase</fullName>
    </alternativeName>
</protein>
<feature type="chain" id="PRO_1000047211" description="Thiopurine S-methyltransferase">
    <location>
        <begin position="1"/>
        <end position="216"/>
    </location>
</feature>
<feature type="binding site" evidence="1">
    <location>
        <position position="10"/>
    </location>
    <ligand>
        <name>S-adenosyl-L-methionine</name>
        <dbReference type="ChEBI" id="CHEBI:59789"/>
    </ligand>
</feature>
<feature type="binding site" evidence="1">
    <location>
        <position position="45"/>
    </location>
    <ligand>
        <name>S-adenosyl-L-methionine</name>
        <dbReference type="ChEBI" id="CHEBI:59789"/>
    </ligand>
</feature>
<feature type="binding site" evidence="1">
    <location>
        <position position="66"/>
    </location>
    <ligand>
        <name>S-adenosyl-L-methionine</name>
        <dbReference type="ChEBI" id="CHEBI:59789"/>
    </ligand>
</feature>
<feature type="binding site" evidence="1">
    <location>
        <position position="123"/>
    </location>
    <ligand>
        <name>S-adenosyl-L-methionine</name>
        <dbReference type="ChEBI" id="CHEBI:59789"/>
    </ligand>
</feature>
<comment type="catalytic activity">
    <reaction evidence="1">
        <text>S-adenosyl-L-methionine + a thiopurine = S-adenosyl-L-homocysteine + a thiopurine S-methylether.</text>
        <dbReference type="EC" id="2.1.1.67"/>
    </reaction>
</comment>
<comment type="subcellular location">
    <subcellularLocation>
        <location evidence="1">Cytoplasm</location>
    </subcellularLocation>
</comment>
<comment type="similarity">
    <text evidence="1">Belongs to the class I-like SAM-binding methyltransferase superfamily. TPMT family.</text>
</comment>
<keyword id="KW-0963">Cytoplasm</keyword>
<keyword id="KW-0489">Methyltransferase</keyword>
<keyword id="KW-0949">S-adenosyl-L-methionine</keyword>
<keyword id="KW-0808">Transferase</keyword>
<gene>
    <name evidence="1" type="primary">tpm</name>
    <name type="ordered locus">PSEEN1581</name>
</gene>
<accession>Q1ID19</accession>
<dbReference type="EC" id="2.1.1.67" evidence="1"/>
<dbReference type="EMBL" id="CT573326">
    <property type="protein sequence ID" value="CAK14442.1"/>
    <property type="molecule type" value="Genomic_DNA"/>
</dbReference>
<dbReference type="RefSeq" id="WP_011532855.1">
    <property type="nucleotide sequence ID" value="NC_008027.1"/>
</dbReference>
<dbReference type="SMR" id="Q1ID19"/>
<dbReference type="STRING" id="384676.PSEEN1581"/>
<dbReference type="GeneID" id="32804823"/>
<dbReference type="KEGG" id="pen:PSEEN1581"/>
<dbReference type="eggNOG" id="COG0500">
    <property type="taxonomic scope" value="Bacteria"/>
</dbReference>
<dbReference type="HOGENOM" id="CLU_085515_1_0_6"/>
<dbReference type="OrthoDB" id="9778208at2"/>
<dbReference type="Proteomes" id="UP000000658">
    <property type="component" value="Chromosome"/>
</dbReference>
<dbReference type="GO" id="GO:0005737">
    <property type="term" value="C:cytoplasm"/>
    <property type="evidence" value="ECO:0007669"/>
    <property type="project" value="UniProtKB-SubCell"/>
</dbReference>
<dbReference type="GO" id="GO:0008119">
    <property type="term" value="F:thiopurine S-methyltransferase activity"/>
    <property type="evidence" value="ECO:0007669"/>
    <property type="project" value="UniProtKB-UniRule"/>
</dbReference>
<dbReference type="GO" id="GO:0032259">
    <property type="term" value="P:methylation"/>
    <property type="evidence" value="ECO:0007669"/>
    <property type="project" value="UniProtKB-KW"/>
</dbReference>
<dbReference type="GO" id="GO:0010038">
    <property type="term" value="P:response to metal ion"/>
    <property type="evidence" value="ECO:0007669"/>
    <property type="project" value="InterPro"/>
</dbReference>
<dbReference type="FunFam" id="3.40.50.150:FF:000101">
    <property type="entry name" value="Thiopurine S-methyltransferase"/>
    <property type="match status" value="1"/>
</dbReference>
<dbReference type="Gene3D" id="3.40.50.150">
    <property type="entry name" value="Vaccinia Virus protein VP39"/>
    <property type="match status" value="1"/>
</dbReference>
<dbReference type="HAMAP" id="MF_00812">
    <property type="entry name" value="Thiopur_methtran"/>
    <property type="match status" value="1"/>
</dbReference>
<dbReference type="InterPro" id="IPR029063">
    <property type="entry name" value="SAM-dependent_MTases_sf"/>
</dbReference>
<dbReference type="InterPro" id="IPR022474">
    <property type="entry name" value="Thiopur_S-MeTfrase_Se/Te_detox"/>
</dbReference>
<dbReference type="InterPro" id="IPR025835">
    <property type="entry name" value="Thiopurine_S-MeTrfase"/>
</dbReference>
<dbReference type="InterPro" id="IPR008854">
    <property type="entry name" value="TPMT"/>
</dbReference>
<dbReference type="NCBIfam" id="NF009732">
    <property type="entry name" value="PRK13255.1"/>
    <property type="match status" value="1"/>
</dbReference>
<dbReference type="NCBIfam" id="TIGR03840">
    <property type="entry name" value="TMPT_Se_Te"/>
    <property type="match status" value="1"/>
</dbReference>
<dbReference type="PANTHER" id="PTHR10259">
    <property type="entry name" value="THIOPURINE S-METHYLTRANSFERASE"/>
    <property type="match status" value="1"/>
</dbReference>
<dbReference type="PANTHER" id="PTHR10259:SF11">
    <property type="entry name" value="THIOPURINE S-METHYLTRANSFERASE"/>
    <property type="match status" value="1"/>
</dbReference>
<dbReference type="Pfam" id="PF05724">
    <property type="entry name" value="TPMT"/>
    <property type="match status" value="1"/>
</dbReference>
<dbReference type="PIRSF" id="PIRSF023956">
    <property type="entry name" value="Thiopurine_S-methyltransferase"/>
    <property type="match status" value="1"/>
</dbReference>
<dbReference type="SUPFAM" id="SSF53335">
    <property type="entry name" value="S-adenosyl-L-methionine-dependent methyltransferases"/>
    <property type="match status" value="1"/>
</dbReference>
<dbReference type="PROSITE" id="PS51585">
    <property type="entry name" value="SAM_MT_TPMT"/>
    <property type="match status" value="1"/>
</dbReference>
<name>TPMT_PSEE4</name>
<sequence>MEPAFWHKRWADNQIGFHQLQVNPYLQAHWPALGLAPGARVLVPLCGKSLDMLWLAAQGYRVLGVELSRRAVEDFFTEHGLPAQVTQHGAFEAWRSDEVEIWCGDVFALRAEDLADCAGVYDRAALIALPPEMRERYMALLGAKLPTACRGVLVTLDYDQALIDGPPFSVPDAEVRAGFSGWQVDEVEGLEILEDSPKFIKAGVSSLVERAYRLTR</sequence>
<evidence type="ECO:0000255" key="1">
    <source>
        <dbReference type="HAMAP-Rule" id="MF_00812"/>
    </source>
</evidence>
<reference key="1">
    <citation type="journal article" date="2006" name="Nat. Biotechnol.">
        <title>Complete genome sequence of the entomopathogenic and metabolically versatile soil bacterium Pseudomonas entomophila.</title>
        <authorList>
            <person name="Vodovar N."/>
            <person name="Vallenet D."/>
            <person name="Cruveiller S."/>
            <person name="Rouy Z."/>
            <person name="Barbe V."/>
            <person name="Acosta C."/>
            <person name="Cattolico L."/>
            <person name="Jubin C."/>
            <person name="Lajus A."/>
            <person name="Segurens B."/>
            <person name="Vacherie B."/>
            <person name="Wincker P."/>
            <person name="Weissenbach J."/>
            <person name="Lemaitre B."/>
            <person name="Medigue C."/>
            <person name="Boccard F."/>
        </authorList>
    </citation>
    <scope>NUCLEOTIDE SEQUENCE [LARGE SCALE GENOMIC DNA]</scope>
    <source>
        <strain>L48</strain>
    </source>
</reference>
<organism>
    <name type="scientific">Pseudomonas entomophila (strain L48)</name>
    <dbReference type="NCBI Taxonomy" id="384676"/>
    <lineage>
        <taxon>Bacteria</taxon>
        <taxon>Pseudomonadati</taxon>
        <taxon>Pseudomonadota</taxon>
        <taxon>Gammaproteobacteria</taxon>
        <taxon>Pseudomonadales</taxon>
        <taxon>Pseudomonadaceae</taxon>
        <taxon>Pseudomonas</taxon>
    </lineage>
</organism>